<sequence>MSGKTIYLGVIGVGGVGAHFLTQLSRLPNAPSLVLLARSSQTVTSPAPSYSPAIAPSDWQSAFSTSSSASYTQSGAWNPDQIAAYLSKAPGRAVLVDNTSDPTVADAYPLFLSKGISIVTPNKKAFSSSFNLWKNIFNTAASTSSLVYHESTVGAGLPVVSTLRDLVATGDRITRIEGVFSGTLSFLFNSFAPATAQSGVSAQKWSQVVAQAKDLGYTEPDPRDDLNGMDVARKVTILARIAGLEVQSPESFPVESLIPAKLRGLTSAAEFMQRLPDFDDQMEAIKNQAEAEGKIVRYVGRVDVEGKVVKVGLQQFDKDSAIAGLKGSDNIISFYTERYGKNPLIIQGAGAGGAVTAMGVTADLIKVLERLH</sequence>
<protein>
    <recommendedName>
        <fullName>Homoserine dehydrogenase</fullName>
        <shortName>HDH</shortName>
        <shortName evidence="6">HSD</shortName>
        <ecNumber evidence="5">1.1.1.3</ecNumber>
    </recommendedName>
    <alternativeName>
        <fullName evidence="6">PbHSD</fullName>
    </alternativeName>
</protein>
<keyword id="KW-0028">Amino-acid biosynthesis</keyword>
<keyword id="KW-0100">Branched-chain amino acid biosynthesis</keyword>
<keyword id="KW-0412">Isoleucine biosynthesis</keyword>
<keyword id="KW-0479">Metal-binding</keyword>
<keyword id="KW-0486">Methionine biosynthesis</keyword>
<keyword id="KW-0520">NAD</keyword>
<keyword id="KW-0521">NADP</keyword>
<keyword id="KW-0560">Oxidoreductase</keyword>
<keyword id="KW-1185">Reference proteome</keyword>
<keyword id="KW-0915">Sodium</keyword>
<keyword id="KW-0791">Threonine biosynthesis</keyword>
<comment type="function">
    <text evidence="5">Catalyzes the conversion of L-aspartate-beta-semialdehyde (L-Asa) to L-homoserine (L-Hse), the third step in the biosynthesis of amino acids that derive from aspartate (the aspartate family of amino acids), including methioinine and threonine, the latter of which is a precursor to isoleucine; production of homoserine leads to a branch-point in the pathway as it can either be O-phosphorylated for processing to threonine, or O-acylated for processing to methionine.</text>
</comment>
<comment type="catalytic activity">
    <reaction evidence="5">
        <text>L-homoserine + NADP(+) = L-aspartate 4-semialdehyde + NADPH + H(+)</text>
        <dbReference type="Rhea" id="RHEA:15761"/>
        <dbReference type="ChEBI" id="CHEBI:15378"/>
        <dbReference type="ChEBI" id="CHEBI:57476"/>
        <dbReference type="ChEBI" id="CHEBI:57783"/>
        <dbReference type="ChEBI" id="CHEBI:58349"/>
        <dbReference type="ChEBI" id="CHEBI:537519"/>
        <dbReference type="EC" id="1.1.1.3"/>
    </reaction>
    <physiologicalReaction direction="right-to-left" evidence="5">
        <dbReference type="Rhea" id="RHEA:15763"/>
    </physiologicalReaction>
</comment>
<comment type="catalytic activity">
    <reaction evidence="3">
        <text>L-homoserine + NAD(+) = L-aspartate 4-semialdehyde + NADH + H(+)</text>
        <dbReference type="Rhea" id="RHEA:15757"/>
        <dbReference type="ChEBI" id="CHEBI:15378"/>
        <dbReference type="ChEBI" id="CHEBI:57476"/>
        <dbReference type="ChEBI" id="CHEBI:57540"/>
        <dbReference type="ChEBI" id="CHEBI:57945"/>
        <dbReference type="ChEBI" id="CHEBI:537519"/>
        <dbReference type="EC" id="1.1.1.3"/>
    </reaction>
    <physiologicalReaction direction="right-to-left" evidence="3">
        <dbReference type="Rhea" id="RHEA:15759"/>
    </physiologicalReaction>
</comment>
<comment type="cofactor">
    <cofactor evidence="3">
        <name>a metal cation</name>
        <dbReference type="ChEBI" id="CHEBI:25213"/>
    </cofactor>
    <text evidence="3">A sodium ion is seen in the structure; a metal ion may subtly affect the relative position of the nucleotide-binding region to influence enzyme activity, and could increase the stability of the enzyme.</text>
</comment>
<comment type="biophysicochemical properties">
    <kinetics>
        <KM evidence="5">0.22 mM for L-homoserine as variable substrate and NADP+ as saturating substrate (at pH 9)</KM>
    </kinetics>
    <phDependence>
        <text evidence="5">Optimum pH is between 9.35 and 9.50 in the reverse direction.</text>
    </phDependence>
</comment>
<comment type="pathway">
    <text evidence="8">Amino-acid biosynthesis; L-methionine biosynthesis via de novo pathway; L-homoserine from L-aspartate: step 3/3.</text>
</comment>
<comment type="pathway">
    <text evidence="8">Amino-acid biosynthesis; L-threonine biosynthesis; L-threonine from L-aspartate: step 3/5.</text>
</comment>
<comment type="subunit">
    <text evidence="5">Homodimer.</text>
</comment>
<comment type="similarity">
    <text evidence="7">Belongs to the homoserine dehydrogenase family.</text>
</comment>
<name>DHOM_PARBD</name>
<evidence type="ECO:0000250" key="1">
    <source>
        <dbReference type="UniProtKB" id="F9VNG5"/>
    </source>
</evidence>
<evidence type="ECO:0000250" key="2">
    <source>
        <dbReference type="UniProtKB" id="O58802"/>
    </source>
</evidence>
<evidence type="ECO:0000250" key="3">
    <source>
        <dbReference type="UniProtKB" id="P31116"/>
    </source>
</evidence>
<evidence type="ECO:0000255" key="4">
    <source>
        <dbReference type="PIRSR" id="PIRSR036497-1"/>
    </source>
</evidence>
<evidence type="ECO:0000269" key="5">
    <source>
    </source>
</evidence>
<evidence type="ECO:0000303" key="6">
    <source>
    </source>
</evidence>
<evidence type="ECO:0000305" key="7"/>
<evidence type="ECO:0000305" key="8">
    <source>
    </source>
</evidence>
<evidence type="ECO:0000312" key="9">
    <source>
        <dbReference type="EMBL" id="EEH44374.1"/>
    </source>
</evidence>
<evidence type="ECO:0000312" key="10">
    <source>
        <dbReference type="Proteomes" id="UP000001628"/>
    </source>
</evidence>
<feature type="chain" id="PRO_0000460559" description="Homoserine dehydrogenase">
    <location>
        <begin position="1"/>
        <end position="372"/>
    </location>
</feature>
<feature type="active site" description="Proton donor" evidence="4">
    <location>
        <position position="234"/>
    </location>
</feature>
<feature type="binding site" evidence="3">
    <location>
        <position position="13"/>
    </location>
    <ligand>
        <name>NAD(+)</name>
        <dbReference type="ChEBI" id="CHEBI:57540"/>
    </ligand>
</feature>
<feature type="binding site" evidence="3">
    <location>
        <position position="15"/>
    </location>
    <ligand>
        <name>NAD(+)</name>
        <dbReference type="ChEBI" id="CHEBI:57540"/>
    </ligand>
</feature>
<feature type="binding site" evidence="3">
    <location>
        <position position="16"/>
    </location>
    <ligand>
        <name>NAD(+)</name>
        <dbReference type="ChEBI" id="CHEBI:57540"/>
    </ligand>
</feature>
<feature type="binding site" evidence="1">
    <location>
        <position position="16"/>
    </location>
    <ligand>
        <name>NADP(+)</name>
        <dbReference type="ChEBI" id="CHEBI:58349"/>
    </ligand>
</feature>
<feature type="binding site" evidence="2">
    <location>
        <position position="16"/>
    </location>
    <ligand>
        <name>NADPH</name>
        <dbReference type="ChEBI" id="CHEBI:57783"/>
    </ligand>
</feature>
<feature type="binding site" evidence="3">
    <location>
        <position position="99"/>
    </location>
    <ligand>
        <name>NAD(+)</name>
        <dbReference type="ChEBI" id="CHEBI:57540"/>
    </ligand>
</feature>
<feature type="binding site" evidence="1">
    <location>
        <position position="99"/>
    </location>
    <ligand>
        <name>NADP(+)</name>
        <dbReference type="ChEBI" id="CHEBI:58349"/>
    </ligand>
</feature>
<feature type="binding site" evidence="2">
    <location>
        <position position="99"/>
    </location>
    <ligand>
        <name>NADPH</name>
        <dbReference type="ChEBI" id="CHEBI:57783"/>
    </ligand>
</feature>
<feature type="binding site" evidence="2">
    <location>
        <position position="100"/>
    </location>
    <ligand>
        <name>NADPH</name>
        <dbReference type="ChEBI" id="CHEBI:57783"/>
    </ligand>
</feature>
<feature type="binding site" evidence="1">
    <location>
        <position position="123"/>
    </location>
    <ligand>
        <name>NADP(+)</name>
        <dbReference type="ChEBI" id="CHEBI:58349"/>
    </ligand>
</feature>
<feature type="binding site" evidence="2">
    <location>
        <position position="123"/>
    </location>
    <ligand>
        <name>NADPH</name>
        <dbReference type="ChEBI" id="CHEBI:57783"/>
    </ligand>
</feature>
<feature type="binding site" evidence="3">
    <location>
        <position position="150"/>
    </location>
    <ligand>
        <name>Na(+)</name>
        <dbReference type="ChEBI" id="CHEBI:29101"/>
    </ligand>
</feature>
<feature type="binding site" evidence="3">
    <location>
        <position position="153"/>
    </location>
    <ligand>
        <name>Na(+)</name>
        <dbReference type="ChEBI" id="CHEBI:29101"/>
    </ligand>
</feature>
<feature type="binding site" evidence="3">
    <location>
        <position position="155"/>
    </location>
    <ligand>
        <name>Na(+)</name>
        <dbReference type="ChEBI" id="CHEBI:29101"/>
    </ligand>
</feature>
<feature type="binding site" evidence="3">
    <location>
        <position position="157"/>
    </location>
    <ligand>
        <name>Na(+)</name>
        <dbReference type="ChEBI" id="CHEBI:29101"/>
    </ligand>
</feature>
<feature type="binding site" evidence="1">
    <location>
        <position position="216"/>
    </location>
    <ligand>
        <name>NADP(+)</name>
        <dbReference type="ChEBI" id="CHEBI:58349"/>
    </ligand>
</feature>
<feature type="binding site" evidence="3">
    <location>
        <position position="219"/>
    </location>
    <ligand>
        <name>L-homoserine</name>
        <dbReference type="ChEBI" id="CHEBI:57476"/>
    </ligand>
</feature>
<feature type="binding site" evidence="1">
    <location>
        <position position="219"/>
    </location>
    <ligand>
        <name>NADP(+)</name>
        <dbReference type="ChEBI" id="CHEBI:58349"/>
    </ligand>
</feature>
<feature type="binding site" evidence="3">
    <location>
        <position position="230"/>
    </location>
    <ligand>
        <name>L-homoserine</name>
        <dbReference type="ChEBI" id="CHEBI:57476"/>
    </ligand>
</feature>
<feature type="binding site" evidence="3">
    <location>
        <position position="352"/>
    </location>
    <ligand>
        <name>NAD(+)</name>
        <dbReference type="ChEBI" id="CHEBI:57540"/>
    </ligand>
</feature>
<feature type="binding site" evidence="1">
    <location>
        <position position="352"/>
    </location>
    <ligand>
        <name>NADP(+)</name>
        <dbReference type="ChEBI" id="CHEBI:58349"/>
    </ligand>
</feature>
<feature type="binding site" evidence="2">
    <location>
        <position position="352"/>
    </location>
    <ligand>
        <name>NADPH</name>
        <dbReference type="ChEBI" id="CHEBI:57783"/>
    </ligand>
</feature>
<organism evidence="10">
    <name type="scientific">Paracoccidioides brasiliensis (strain Pb18)</name>
    <dbReference type="NCBI Taxonomy" id="502780"/>
    <lineage>
        <taxon>Eukaryota</taxon>
        <taxon>Fungi</taxon>
        <taxon>Dikarya</taxon>
        <taxon>Ascomycota</taxon>
        <taxon>Pezizomycotina</taxon>
        <taxon>Eurotiomycetes</taxon>
        <taxon>Eurotiomycetidae</taxon>
        <taxon>Onygenales</taxon>
        <taxon>Ajellomycetaceae</taxon>
        <taxon>Paracoccidioides</taxon>
    </lineage>
</organism>
<proteinExistence type="evidence at protein level"/>
<accession>C1G1C3</accession>
<gene>
    <name evidence="9" type="ORF">PADG_00663</name>
</gene>
<reference evidence="10" key="1">
    <citation type="journal article" date="2011" name="PLoS Genet.">
        <title>Comparative genomic analysis of human fungal pathogens causing paracoccidioidomycosis.</title>
        <authorList>
            <person name="Desjardins C.A."/>
            <person name="Champion M.D."/>
            <person name="Holder J.W."/>
            <person name="Muszewska A."/>
            <person name="Goldberg J."/>
            <person name="Bailao A.M."/>
            <person name="Brigido M.M."/>
            <person name="Ferreira M.E."/>
            <person name="Garcia A.M."/>
            <person name="Grynberg M."/>
            <person name="Gujja S."/>
            <person name="Heiman D.I."/>
            <person name="Henn M.R."/>
            <person name="Kodira C.D."/>
            <person name="Leon-Narvaez H."/>
            <person name="Longo L.V.G."/>
            <person name="Ma L.-J."/>
            <person name="Malavazi I."/>
            <person name="Matsuo A.L."/>
            <person name="Morais F.V."/>
            <person name="Pereira M."/>
            <person name="Rodriguez-Brito S."/>
            <person name="Sakthikumar S."/>
            <person name="Salem-Izacc S.M."/>
            <person name="Sykes S.M."/>
            <person name="Teixeira M.M."/>
            <person name="Vallejo M.C."/>
            <person name="Walter M.E."/>
            <person name="Yandava C."/>
            <person name="Young S."/>
            <person name="Zeng Q."/>
            <person name="Zucker J."/>
            <person name="Felipe M.S."/>
            <person name="Goldman G.H."/>
            <person name="Haas B.J."/>
            <person name="McEwen J.G."/>
            <person name="Nino-Vega G."/>
            <person name="Puccia R."/>
            <person name="San-Blas G."/>
            <person name="Soares C.M."/>
            <person name="Birren B.W."/>
            <person name="Cuomo C.A."/>
        </authorList>
    </citation>
    <scope>NUCLEOTIDE SEQUENCE [LARGE SCALE GENOMIC DNA]</scope>
    <source>
        <strain evidence="10">Pb18</strain>
    </source>
</reference>
<reference evidence="7" key="2">
    <citation type="journal article" date="2023" name="Biochimie">
        <title>Heterologous overexpression and characterization of homoserine dehydrogenase from Paracoccidioides brasiliensis.</title>
        <authorList>
            <person name="Santos J.L."/>
            <person name="Angelo E.A."/>
            <person name="Gauze G.F."/>
            <person name="Seixas F.A.V."/>
            <person name="Canduri F."/>
        </authorList>
    </citation>
    <scope>FUNCTION</scope>
    <scope>CATALYTIC ACTIVITY</scope>
    <scope>BIOPHYSICOCHEMICAL PROPERTIES</scope>
    <scope>SUBUNIT</scope>
</reference>
<dbReference type="EC" id="1.1.1.3" evidence="5"/>
<dbReference type="EMBL" id="KN275957">
    <property type="protein sequence ID" value="EEH44374.1"/>
    <property type="molecule type" value="Genomic_DNA"/>
</dbReference>
<dbReference type="RefSeq" id="XP_010756447.1">
    <property type="nucleotide sequence ID" value="XM_010758145.1"/>
</dbReference>
<dbReference type="SMR" id="C1G1C3"/>
<dbReference type="FunCoup" id="C1G1C3">
    <property type="interactions" value="327"/>
</dbReference>
<dbReference type="STRING" id="502780.C1G1C3"/>
<dbReference type="GeneID" id="22580469"/>
<dbReference type="KEGG" id="pbn:PADG_00663"/>
<dbReference type="VEuPathDB" id="FungiDB:PADG_00663"/>
<dbReference type="eggNOG" id="KOG0455">
    <property type="taxonomic scope" value="Eukaryota"/>
</dbReference>
<dbReference type="HOGENOM" id="CLU_009116_0_1_1"/>
<dbReference type="InParanoid" id="C1G1C3"/>
<dbReference type="OMA" id="IYTRCYS"/>
<dbReference type="OrthoDB" id="33814at33183"/>
<dbReference type="BRENDA" id="1.1.1.3">
    <property type="organism ID" value="6937"/>
</dbReference>
<dbReference type="UniPathway" id="UPA00050">
    <property type="reaction ID" value="UER00063"/>
</dbReference>
<dbReference type="UniPathway" id="UPA00051">
    <property type="reaction ID" value="UER00465"/>
</dbReference>
<dbReference type="Proteomes" id="UP000001628">
    <property type="component" value="Unassembled WGS sequence"/>
</dbReference>
<dbReference type="GO" id="GO:0004412">
    <property type="term" value="F:homoserine dehydrogenase activity"/>
    <property type="evidence" value="ECO:0000314"/>
    <property type="project" value="UniProtKB"/>
</dbReference>
<dbReference type="GO" id="GO:0046872">
    <property type="term" value="F:metal ion binding"/>
    <property type="evidence" value="ECO:0007669"/>
    <property type="project" value="UniProtKB-KW"/>
</dbReference>
<dbReference type="GO" id="GO:0050661">
    <property type="term" value="F:NADP binding"/>
    <property type="evidence" value="ECO:0007669"/>
    <property type="project" value="InterPro"/>
</dbReference>
<dbReference type="GO" id="GO:0009090">
    <property type="term" value="P:homoserine biosynthetic process"/>
    <property type="evidence" value="ECO:0007669"/>
    <property type="project" value="TreeGrafter"/>
</dbReference>
<dbReference type="GO" id="GO:0009097">
    <property type="term" value="P:isoleucine biosynthetic process"/>
    <property type="evidence" value="ECO:0007669"/>
    <property type="project" value="UniProtKB-KW"/>
</dbReference>
<dbReference type="GO" id="GO:0009086">
    <property type="term" value="P:methionine biosynthetic process"/>
    <property type="evidence" value="ECO:0000314"/>
    <property type="project" value="UniProtKB"/>
</dbReference>
<dbReference type="GO" id="GO:0009088">
    <property type="term" value="P:threonine biosynthetic process"/>
    <property type="evidence" value="ECO:0000314"/>
    <property type="project" value="UniProtKB"/>
</dbReference>
<dbReference type="FunFam" id="3.30.360.10:FF:000006">
    <property type="entry name" value="Bifunctional aspartokinase/homoserine dehydrogenase"/>
    <property type="match status" value="1"/>
</dbReference>
<dbReference type="Gene3D" id="3.30.360.10">
    <property type="entry name" value="Dihydrodipicolinate Reductase, domain 2"/>
    <property type="match status" value="1"/>
</dbReference>
<dbReference type="Gene3D" id="3.40.50.720">
    <property type="entry name" value="NAD(P)-binding Rossmann-like Domain"/>
    <property type="match status" value="1"/>
</dbReference>
<dbReference type="InterPro" id="IPR005106">
    <property type="entry name" value="Asp/hSer_DH_NAD-bd"/>
</dbReference>
<dbReference type="InterPro" id="IPR011147">
    <property type="entry name" value="Bifunc_Aspkin/hSer_DH"/>
</dbReference>
<dbReference type="InterPro" id="IPR001342">
    <property type="entry name" value="HDH_cat"/>
</dbReference>
<dbReference type="InterPro" id="IPR019811">
    <property type="entry name" value="HDH_CS"/>
</dbReference>
<dbReference type="InterPro" id="IPR022697">
    <property type="entry name" value="HDH_short"/>
</dbReference>
<dbReference type="InterPro" id="IPR036291">
    <property type="entry name" value="NAD(P)-bd_dom_sf"/>
</dbReference>
<dbReference type="PANTHER" id="PTHR43070">
    <property type="match status" value="1"/>
</dbReference>
<dbReference type="PANTHER" id="PTHR43070:SF5">
    <property type="entry name" value="HOMOSERINE DEHYDROGENASE"/>
    <property type="match status" value="1"/>
</dbReference>
<dbReference type="Pfam" id="PF00742">
    <property type="entry name" value="Homoserine_dh"/>
    <property type="match status" value="1"/>
</dbReference>
<dbReference type="Pfam" id="PF03447">
    <property type="entry name" value="NAD_binding_3"/>
    <property type="match status" value="1"/>
</dbReference>
<dbReference type="PIRSF" id="PIRSF036497">
    <property type="entry name" value="HDH_short"/>
    <property type="match status" value="1"/>
</dbReference>
<dbReference type="SUPFAM" id="SSF55347">
    <property type="entry name" value="Glyceraldehyde-3-phosphate dehydrogenase-like, C-terminal domain"/>
    <property type="match status" value="1"/>
</dbReference>
<dbReference type="SUPFAM" id="SSF51735">
    <property type="entry name" value="NAD(P)-binding Rossmann-fold domains"/>
    <property type="match status" value="1"/>
</dbReference>
<dbReference type="PROSITE" id="PS01042">
    <property type="entry name" value="HOMOSER_DHGENASE"/>
    <property type="match status" value="1"/>
</dbReference>